<comment type="catalytic activity">
    <reaction evidence="1">
        <text>2-formamido-N(1)-(5-O-phospho-beta-D-ribosyl)acetamidine + ATP = 5-amino-1-(5-phospho-beta-D-ribosyl)imidazole + ADP + phosphate + H(+)</text>
        <dbReference type="Rhea" id="RHEA:23032"/>
        <dbReference type="ChEBI" id="CHEBI:15378"/>
        <dbReference type="ChEBI" id="CHEBI:30616"/>
        <dbReference type="ChEBI" id="CHEBI:43474"/>
        <dbReference type="ChEBI" id="CHEBI:137981"/>
        <dbReference type="ChEBI" id="CHEBI:147287"/>
        <dbReference type="ChEBI" id="CHEBI:456216"/>
        <dbReference type="EC" id="6.3.3.1"/>
    </reaction>
</comment>
<comment type="pathway">
    <text evidence="1">Purine metabolism; IMP biosynthesis via de novo pathway; 5-amino-1-(5-phospho-D-ribosyl)imidazole from N(2)-formyl-N(1)-(5-phospho-D-ribosyl)glycinamide: step 2/2.</text>
</comment>
<comment type="subcellular location">
    <subcellularLocation>
        <location evidence="1">Cytoplasm</location>
    </subcellularLocation>
</comment>
<comment type="similarity">
    <text evidence="1">Belongs to the AIR synthase family.</text>
</comment>
<dbReference type="EC" id="6.3.3.1" evidence="1"/>
<dbReference type="EMBL" id="CP001177">
    <property type="protein sequence ID" value="ACJ82352.1"/>
    <property type="molecule type" value="Genomic_DNA"/>
</dbReference>
<dbReference type="SMR" id="B7HS34"/>
<dbReference type="KEGG" id="bcr:BCAH187_A0369"/>
<dbReference type="HOGENOM" id="CLU_047116_0_0_9"/>
<dbReference type="UniPathway" id="UPA00074">
    <property type="reaction ID" value="UER00129"/>
</dbReference>
<dbReference type="Proteomes" id="UP000002214">
    <property type="component" value="Chromosome"/>
</dbReference>
<dbReference type="GO" id="GO:0005829">
    <property type="term" value="C:cytosol"/>
    <property type="evidence" value="ECO:0007669"/>
    <property type="project" value="TreeGrafter"/>
</dbReference>
<dbReference type="GO" id="GO:0005524">
    <property type="term" value="F:ATP binding"/>
    <property type="evidence" value="ECO:0007669"/>
    <property type="project" value="UniProtKB-KW"/>
</dbReference>
<dbReference type="GO" id="GO:0004637">
    <property type="term" value="F:phosphoribosylamine-glycine ligase activity"/>
    <property type="evidence" value="ECO:0007669"/>
    <property type="project" value="TreeGrafter"/>
</dbReference>
<dbReference type="GO" id="GO:0004641">
    <property type="term" value="F:phosphoribosylformylglycinamidine cyclo-ligase activity"/>
    <property type="evidence" value="ECO:0007669"/>
    <property type="project" value="UniProtKB-UniRule"/>
</dbReference>
<dbReference type="GO" id="GO:0006189">
    <property type="term" value="P:'de novo' IMP biosynthetic process"/>
    <property type="evidence" value="ECO:0007669"/>
    <property type="project" value="UniProtKB-UniRule"/>
</dbReference>
<dbReference type="GO" id="GO:0046084">
    <property type="term" value="P:adenine biosynthetic process"/>
    <property type="evidence" value="ECO:0007669"/>
    <property type="project" value="TreeGrafter"/>
</dbReference>
<dbReference type="CDD" id="cd02196">
    <property type="entry name" value="PurM"/>
    <property type="match status" value="1"/>
</dbReference>
<dbReference type="FunFam" id="3.30.1330.10:FF:000001">
    <property type="entry name" value="Phosphoribosylformylglycinamidine cyclo-ligase"/>
    <property type="match status" value="1"/>
</dbReference>
<dbReference type="FunFam" id="3.90.650.10:FF:000001">
    <property type="entry name" value="Phosphoribosylformylglycinamidine cyclo-ligase"/>
    <property type="match status" value="1"/>
</dbReference>
<dbReference type="Gene3D" id="3.90.650.10">
    <property type="entry name" value="PurM-like C-terminal domain"/>
    <property type="match status" value="1"/>
</dbReference>
<dbReference type="Gene3D" id="3.30.1330.10">
    <property type="entry name" value="PurM-like, N-terminal domain"/>
    <property type="match status" value="1"/>
</dbReference>
<dbReference type="HAMAP" id="MF_00741">
    <property type="entry name" value="AIRS"/>
    <property type="match status" value="1"/>
</dbReference>
<dbReference type="InterPro" id="IPR010918">
    <property type="entry name" value="PurM-like_C_dom"/>
</dbReference>
<dbReference type="InterPro" id="IPR036676">
    <property type="entry name" value="PurM-like_C_sf"/>
</dbReference>
<dbReference type="InterPro" id="IPR016188">
    <property type="entry name" value="PurM-like_N"/>
</dbReference>
<dbReference type="InterPro" id="IPR036921">
    <property type="entry name" value="PurM-like_N_sf"/>
</dbReference>
<dbReference type="InterPro" id="IPR004733">
    <property type="entry name" value="PurM_cligase"/>
</dbReference>
<dbReference type="NCBIfam" id="TIGR00878">
    <property type="entry name" value="purM"/>
    <property type="match status" value="1"/>
</dbReference>
<dbReference type="PANTHER" id="PTHR10520:SF12">
    <property type="entry name" value="TRIFUNCTIONAL PURINE BIOSYNTHETIC PROTEIN ADENOSINE-3"/>
    <property type="match status" value="1"/>
</dbReference>
<dbReference type="PANTHER" id="PTHR10520">
    <property type="entry name" value="TRIFUNCTIONAL PURINE BIOSYNTHETIC PROTEIN ADENOSINE-3-RELATED"/>
    <property type="match status" value="1"/>
</dbReference>
<dbReference type="Pfam" id="PF00586">
    <property type="entry name" value="AIRS"/>
    <property type="match status" value="1"/>
</dbReference>
<dbReference type="Pfam" id="PF02769">
    <property type="entry name" value="AIRS_C"/>
    <property type="match status" value="1"/>
</dbReference>
<dbReference type="SUPFAM" id="SSF56042">
    <property type="entry name" value="PurM C-terminal domain-like"/>
    <property type="match status" value="1"/>
</dbReference>
<dbReference type="SUPFAM" id="SSF55326">
    <property type="entry name" value="PurM N-terminal domain-like"/>
    <property type="match status" value="1"/>
</dbReference>
<organism>
    <name type="scientific">Bacillus cereus (strain AH187)</name>
    <dbReference type="NCBI Taxonomy" id="405534"/>
    <lineage>
        <taxon>Bacteria</taxon>
        <taxon>Bacillati</taxon>
        <taxon>Bacillota</taxon>
        <taxon>Bacilli</taxon>
        <taxon>Bacillales</taxon>
        <taxon>Bacillaceae</taxon>
        <taxon>Bacillus</taxon>
        <taxon>Bacillus cereus group</taxon>
    </lineage>
</organism>
<keyword id="KW-0067">ATP-binding</keyword>
<keyword id="KW-0963">Cytoplasm</keyword>
<keyword id="KW-0436">Ligase</keyword>
<keyword id="KW-0547">Nucleotide-binding</keyword>
<keyword id="KW-0658">Purine biosynthesis</keyword>
<feature type="chain" id="PRO_1000192992" description="Phosphoribosylformylglycinamidine cyclo-ligase">
    <location>
        <begin position="1"/>
        <end position="346"/>
    </location>
</feature>
<gene>
    <name evidence="1" type="primary">purM</name>
    <name type="ordered locus">BCAH187_A0369</name>
</gene>
<reference key="1">
    <citation type="submission" date="2008-10" db="EMBL/GenBank/DDBJ databases">
        <title>Genome sequence of Bacillus cereus AH187.</title>
        <authorList>
            <person name="Dodson R.J."/>
            <person name="Durkin A.S."/>
            <person name="Rosovitz M.J."/>
            <person name="Rasko D.A."/>
            <person name="Kolsto A.B."/>
            <person name="Okstad O.A."/>
            <person name="Ravel J."/>
            <person name="Sutton G."/>
        </authorList>
    </citation>
    <scope>NUCLEOTIDE SEQUENCE [LARGE SCALE GENOMIC DNA]</scope>
    <source>
        <strain>AH187</strain>
    </source>
</reference>
<evidence type="ECO:0000255" key="1">
    <source>
        <dbReference type="HAMAP-Rule" id="MF_00741"/>
    </source>
</evidence>
<accession>B7HS34</accession>
<protein>
    <recommendedName>
        <fullName evidence="1">Phosphoribosylformylglycinamidine cyclo-ligase</fullName>
        <ecNumber evidence="1">6.3.3.1</ecNumber>
    </recommendedName>
    <alternativeName>
        <fullName evidence="1">AIR synthase</fullName>
    </alternativeName>
    <alternativeName>
        <fullName evidence="1">AIRS</fullName>
    </alternativeName>
    <alternativeName>
        <fullName evidence="1">Phosphoribosyl-aminoimidazole synthetase</fullName>
    </alternativeName>
</protein>
<sequence>MANAYKQAGVDIEAGYEAVSRMKKHVQTTMRKEVLGGLGGFGGMFDLSKFALEEPVLVSGTDGVGTKLMLAFMADKHDTIGIDAVAMCVNDIVVQGAEPLFFLDYIACGKAEPSKIENIVKGISEGCRQAGCALIGGETAEMPGMYSTEEYDLAGFTVGIVDKKKIVTGENIEAGHVLIGLASSGIHSNGYSLVRKVLLEDGELSLDRIYGRLELPLGEELLKPTKIYVKPILELLKKYEVYGMAHITGGGFIENIPRMLPEEIGAEIELGSWEIQPIFSLLQEVGKLEEKEMFNIFNMGIGMVVAVKEEDAKDVVRLLEEQGETARIIGRTVQGAGVTFNGGTAL</sequence>
<name>PUR5_BACC7</name>
<proteinExistence type="inferred from homology"/>